<keyword id="KW-0150">Chloroplast</keyword>
<keyword id="KW-0472">Membrane</keyword>
<keyword id="KW-0602">Photosynthesis</keyword>
<keyword id="KW-0604">Photosystem II</keyword>
<keyword id="KW-0934">Plastid</keyword>
<keyword id="KW-0674">Reaction center</keyword>
<keyword id="KW-1185">Reference proteome</keyword>
<keyword id="KW-0793">Thylakoid</keyword>
<keyword id="KW-0812">Transmembrane</keyword>
<keyword id="KW-1133">Transmembrane helix</keyword>
<organism>
    <name type="scientific">Nicotiana sylvestris</name>
    <name type="common">Wood tobacco</name>
    <name type="synonym">South American tobacco</name>
    <dbReference type="NCBI Taxonomy" id="4096"/>
    <lineage>
        <taxon>Eukaryota</taxon>
        <taxon>Viridiplantae</taxon>
        <taxon>Streptophyta</taxon>
        <taxon>Embryophyta</taxon>
        <taxon>Tracheophyta</taxon>
        <taxon>Spermatophyta</taxon>
        <taxon>Magnoliopsida</taxon>
        <taxon>eudicotyledons</taxon>
        <taxon>Gunneridae</taxon>
        <taxon>Pentapetalae</taxon>
        <taxon>asterids</taxon>
        <taxon>lamiids</taxon>
        <taxon>Solanales</taxon>
        <taxon>Solanaceae</taxon>
        <taxon>Nicotianoideae</taxon>
        <taxon>Nicotianeae</taxon>
        <taxon>Nicotiana</taxon>
    </lineage>
</organism>
<sequence>MEVNILAFIATALFILVPTAFLLIIYVKTVSQND</sequence>
<comment type="function">
    <text evidence="1">One of the components of the core complex of photosystem II (PSII). PSII is a light-driven water:plastoquinone oxidoreductase that uses light energy to abstract electrons from H(2)O, generating O(2) and a proton gradient subsequently used for ATP formation. It consists of a core antenna complex that captures photons, and an electron transfer chain that converts photonic excitation into a charge separation. This subunit is found at the monomer-monomer interface.</text>
</comment>
<comment type="subunit">
    <text evidence="1">PSII is composed of 1 copy each of membrane proteins PsbA, PsbB, PsbC, PsbD, PsbE, PsbF, PsbH, PsbI, PsbJ, PsbK, PsbL, PsbM, PsbT, PsbX, PsbY, PsbZ, Psb30/Ycf12, at least 3 peripheral proteins of the oxygen-evolving complex and a large number of cofactors. It forms dimeric complexes.</text>
</comment>
<comment type="subcellular location">
    <subcellularLocation>
        <location evidence="1">Plastid</location>
        <location evidence="1">Chloroplast thylakoid membrane</location>
        <topology evidence="1">Single-pass membrane protein</topology>
    </subcellularLocation>
</comment>
<comment type="similarity">
    <text evidence="1">Belongs to the PsbM family.</text>
</comment>
<dbReference type="EMBL" id="AB237912">
    <property type="protein sequence ID" value="BAE46642.1"/>
    <property type="molecule type" value="Genomic_DNA"/>
</dbReference>
<dbReference type="RefSeq" id="YP_358667.1">
    <property type="nucleotide sequence ID" value="NC_007500.1"/>
</dbReference>
<dbReference type="SMR" id="Q3C1G4"/>
<dbReference type="GeneID" id="3735112"/>
<dbReference type="KEGG" id="nsy:3735112"/>
<dbReference type="OrthoDB" id="24143at4085"/>
<dbReference type="Proteomes" id="UP000189701">
    <property type="component" value="Chloroplast Pltd"/>
</dbReference>
<dbReference type="GO" id="GO:0009535">
    <property type="term" value="C:chloroplast thylakoid membrane"/>
    <property type="evidence" value="ECO:0007669"/>
    <property type="project" value="UniProtKB-SubCell"/>
</dbReference>
<dbReference type="GO" id="GO:0009523">
    <property type="term" value="C:photosystem II"/>
    <property type="evidence" value="ECO:0007669"/>
    <property type="project" value="UniProtKB-KW"/>
</dbReference>
<dbReference type="GO" id="GO:0019684">
    <property type="term" value="P:photosynthesis, light reaction"/>
    <property type="evidence" value="ECO:0007669"/>
    <property type="project" value="InterPro"/>
</dbReference>
<dbReference type="HAMAP" id="MF_00438">
    <property type="entry name" value="PSII_PsbM"/>
    <property type="match status" value="1"/>
</dbReference>
<dbReference type="InterPro" id="IPR007826">
    <property type="entry name" value="PSII_PsbM"/>
</dbReference>
<dbReference type="InterPro" id="IPR037269">
    <property type="entry name" value="PSII_PsbM_sf"/>
</dbReference>
<dbReference type="NCBIfam" id="TIGR03038">
    <property type="entry name" value="PS_II_psbM"/>
    <property type="match status" value="1"/>
</dbReference>
<dbReference type="PANTHER" id="PTHR35774">
    <property type="entry name" value="PHOTOSYSTEM II REACTION CENTER PROTEIN M"/>
    <property type="match status" value="1"/>
</dbReference>
<dbReference type="PANTHER" id="PTHR35774:SF1">
    <property type="entry name" value="PHOTOSYSTEM II REACTION CENTER PROTEIN M"/>
    <property type="match status" value="1"/>
</dbReference>
<dbReference type="Pfam" id="PF05151">
    <property type="entry name" value="PsbM"/>
    <property type="match status" value="1"/>
</dbReference>
<dbReference type="SUPFAM" id="SSF161033">
    <property type="entry name" value="Photosystem II reaction center protein M, PsbM"/>
    <property type="match status" value="1"/>
</dbReference>
<geneLocation type="chloroplast"/>
<evidence type="ECO:0000255" key="1">
    <source>
        <dbReference type="HAMAP-Rule" id="MF_00438"/>
    </source>
</evidence>
<name>PSBM_NICSY</name>
<reference key="1">
    <citation type="journal article" date="2006" name="Mol. Genet. Genomics">
        <title>The chloroplast genome of Nicotiana sylvestris and Nicotiana tomentosiformis: complete sequencing confirms that the Nicotiana sylvestris progenitor is the maternal genome donor of Nicotiana tabacum.</title>
        <authorList>
            <person name="Yukawa M."/>
            <person name="Tsudzuki T."/>
            <person name="Sugiura M."/>
        </authorList>
    </citation>
    <scope>NUCLEOTIDE SEQUENCE [LARGE SCALE GENOMIC DNA]</scope>
</reference>
<protein>
    <recommendedName>
        <fullName evidence="1">Photosystem II reaction center protein M</fullName>
        <shortName evidence="1">PSII-M</shortName>
    </recommendedName>
</protein>
<proteinExistence type="inferred from homology"/>
<gene>
    <name evidence="1" type="primary">psbM</name>
</gene>
<accession>Q3C1G4</accession>
<feature type="chain" id="PRO_0000276246" description="Photosystem II reaction center protein M">
    <location>
        <begin position="1"/>
        <end position="34"/>
    </location>
</feature>
<feature type="transmembrane region" description="Helical" evidence="1">
    <location>
        <begin position="5"/>
        <end position="25"/>
    </location>
</feature>